<gene>
    <name type="primary">env</name>
</gene>
<name>ENV1_DROME</name>
<keyword id="KW-0325">Glycoprotein</keyword>
<keyword id="KW-0814">Transposable element</keyword>
<protein>
    <recommendedName>
        <fullName>Retrovirus-related Env polyprotein from transposon gypsy</fullName>
    </recommendedName>
</protein>
<accession>P10403</accession>
<reference key="1">
    <citation type="journal article" date="1986" name="Mol. Cell. Biol.">
        <title>The Drosophila melanogaster gypsy transposable element encodes putative gene products homologous to retroviral proteins.</title>
        <authorList>
            <person name="Marlor R.L."/>
            <person name="Parkhurst S.M."/>
            <person name="Corces V.G."/>
        </authorList>
    </citation>
    <scope>NUCLEOTIDE SEQUENCE [GENOMIC DNA]</scope>
</reference>
<reference key="2">
    <citation type="journal article" date="1992" name="Mol. Gen. Genet.">
        <title>The suppressor of Hairy-wing binding region is required for gypsy mutagenesis.</title>
        <authorList>
            <person name="Smith P.A."/>
            <person name="Corces V.G."/>
        </authorList>
    </citation>
    <scope>NUCLEOTIDE SEQUENCE [GENOMIC DNA]</scope>
</reference>
<organism>
    <name type="scientific">Drosophila melanogaster</name>
    <name type="common">Fruit fly</name>
    <dbReference type="NCBI Taxonomy" id="7227"/>
    <lineage>
        <taxon>Eukaryota</taxon>
        <taxon>Metazoa</taxon>
        <taxon>Ecdysozoa</taxon>
        <taxon>Arthropoda</taxon>
        <taxon>Hexapoda</taxon>
        <taxon>Insecta</taxon>
        <taxon>Pterygota</taxon>
        <taxon>Neoptera</taxon>
        <taxon>Endopterygota</taxon>
        <taxon>Diptera</taxon>
        <taxon>Brachycera</taxon>
        <taxon>Muscomorpha</taxon>
        <taxon>Ephydroidea</taxon>
        <taxon>Drosophilidae</taxon>
        <taxon>Drosophila</taxon>
        <taxon>Sophophora</taxon>
    </lineage>
</organism>
<sequence length="509" mass="56852">TFPLQLGSKLCQGKSEHCSITLSLISRFTLMMFIPLVVANARITDFSHANYIPVLDGDVLVFEQRDLLKHSSNLSEYASMIDETQKLSESFPHSHMRKLLEVDTDHLRTLLSVLKVHHRIARSLDFLGTALKVVAGTPDATDLFKIKITEAQLVESNSRQIAINSETQKQINKLTDTINKVINARKGDLVDTPHLYEALLARNRMLSTEIQNLILTITLVKSNIINPTILDHADLKPLVEQDTPIVSLIEASKIRVLQSENSIHILIAYPRVKFSCKKVAVYPVSHQHTILRLDEDTLAECEHDTFAVTGCTDTTHFTFCERSRRETCVRSLHAGNAAQCHTQPSHLREINPVDDGVVIINEAAAHVSTDGSPETLIEGTYLVTFERTATINGSEFVNLRKTLSKQPGIVRSPLLNIVGHDPVLSIPLLHRMSNENLHSIQNLMDDVESEGSPRLWFVAGVVLNFGLIGSLALYLALRRRRASREIQRTIDTFNMTEDGHKLEGGVVNN</sequence>
<dbReference type="EMBL" id="M12927">
    <property type="protein sequence ID" value="AAA70220.1"/>
    <property type="status" value="ALT_INIT"/>
    <property type="molecule type" value="Genomic_DNA"/>
</dbReference>
<dbReference type="PIR" id="C25666">
    <property type="entry name" value="VCFFGY"/>
</dbReference>
<dbReference type="SMR" id="P10403"/>
<dbReference type="GlyCosmos" id="P10403">
    <property type="glycosylation" value="3 sites, No reported glycans"/>
</dbReference>
<dbReference type="FlyBase" id="FBgn0014964">
    <property type="gene designation" value="gypsy\env"/>
</dbReference>
<dbReference type="PRO" id="PR:P10403"/>
<dbReference type="InterPro" id="IPR009882">
    <property type="entry name" value="Gypsy"/>
</dbReference>
<dbReference type="Pfam" id="PF07253">
    <property type="entry name" value="Gypsy"/>
    <property type="match status" value="1"/>
</dbReference>
<dbReference type="PIRSF" id="PIRSF003841">
    <property type="entry name" value="Gypsy"/>
    <property type="match status" value="1"/>
</dbReference>
<comment type="sequence caution" evidence="2">
    <conflict type="erroneous initiation">
        <sequence resource="EMBL-CDS" id="AAA70220"/>
    </conflict>
</comment>
<feature type="chain" id="PRO_0000086981" description="Retrovirus-related Env polyprotein from transposon gypsy">
    <location>
        <begin position="1"/>
        <end position="509"/>
    </location>
</feature>
<feature type="glycosylation site" description="N-linked (GlcNAc...) asparagine" evidence="1">
    <location>
        <position position="73"/>
    </location>
</feature>
<feature type="glycosylation site" description="N-linked (GlcNAc...) asparagine" evidence="1">
    <location>
        <position position="392"/>
    </location>
</feature>
<feature type="glycosylation site" description="N-linked (GlcNAc...) asparagine" evidence="1">
    <location>
        <position position="494"/>
    </location>
</feature>
<proteinExistence type="predicted"/>
<evidence type="ECO:0000255" key="1"/>
<evidence type="ECO:0000305" key="2"/>